<reference key="1">
    <citation type="journal article" date="2000" name="Mol. Genet. Metab.">
        <title>Structure and analysis of the human dimethylglycine dehydrogenase gene.</title>
        <authorList>
            <person name="Binzak B.A."/>
            <person name="Vockley J.G."/>
            <person name="Jenkins R.B."/>
            <person name="Vockley J."/>
        </authorList>
    </citation>
    <scope>NUCLEOTIDE SEQUENCE [MRNA] (ISOFORM 1)</scope>
    <scope>VARIANT PRO-279</scope>
</reference>
<reference key="2">
    <citation type="journal article" date="2001" name="Am. J. Hum. Genet.">
        <title>Cloning of dimethylglycine dehydrogenase and a new human inborn error of metabolism, dimethylglycine dehydrogenase deficiency.</title>
        <authorList>
            <person name="Binzak B.A."/>
            <person name="Wevers R.A."/>
            <person name="Moolenaar S.H."/>
            <person name="Lee Y.-M."/>
            <person name="Hwu W.-L."/>
            <person name="Poggi-Bach J."/>
            <person name="Engelke U.F.H."/>
            <person name="Hoard H.M."/>
            <person name="Vockley J.G."/>
            <person name="Vockley J."/>
        </authorList>
    </citation>
    <scope>NUCLEOTIDE SEQUENCE [MRNA] (ISOFORM 1)</scope>
    <scope>VARIANTS GLY-530 AND PRO-646</scope>
    <scope>VARIANT DMGDHD ARG-109</scope>
</reference>
<reference key="3">
    <citation type="journal article" date="2004" name="Nat. Genet.">
        <title>Complete sequencing and characterization of 21,243 full-length human cDNAs.</title>
        <authorList>
            <person name="Ota T."/>
            <person name="Suzuki Y."/>
            <person name="Nishikawa T."/>
            <person name="Otsuki T."/>
            <person name="Sugiyama T."/>
            <person name="Irie R."/>
            <person name="Wakamatsu A."/>
            <person name="Hayashi K."/>
            <person name="Sato H."/>
            <person name="Nagai K."/>
            <person name="Kimura K."/>
            <person name="Makita H."/>
            <person name="Sekine M."/>
            <person name="Obayashi M."/>
            <person name="Nishi T."/>
            <person name="Shibahara T."/>
            <person name="Tanaka T."/>
            <person name="Ishii S."/>
            <person name="Yamamoto J."/>
            <person name="Saito K."/>
            <person name="Kawai Y."/>
            <person name="Isono Y."/>
            <person name="Nakamura Y."/>
            <person name="Nagahari K."/>
            <person name="Murakami K."/>
            <person name="Yasuda T."/>
            <person name="Iwayanagi T."/>
            <person name="Wagatsuma M."/>
            <person name="Shiratori A."/>
            <person name="Sudo H."/>
            <person name="Hosoiri T."/>
            <person name="Kaku Y."/>
            <person name="Kodaira H."/>
            <person name="Kondo H."/>
            <person name="Sugawara M."/>
            <person name="Takahashi M."/>
            <person name="Kanda K."/>
            <person name="Yokoi T."/>
            <person name="Furuya T."/>
            <person name="Kikkawa E."/>
            <person name="Omura Y."/>
            <person name="Abe K."/>
            <person name="Kamihara K."/>
            <person name="Katsuta N."/>
            <person name="Sato K."/>
            <person name="Tanikawa M."/>
            <person name="Yamazaki M."/>
            <person name="Ninomiya K."/>
            <person name="Ishibashi T."/>
            <person name="Yamashita H."/>
            <person name="Murakawa K."/>
            <person name="Fujimori K."/>
            <person name="Tanai H."/>
            <person name="Kimata M."/>
            <person name="Watanabe M."/>
            <person name="Hiraoka S."/>
            <person name="Chiba Y."/>
            <person name="Ishida S."/>
            <person name="Ono Y."/>
            <person name="Takiguchi S."/>
            <person name="Watanabe S."/>
            <person name="Yosida M."/>
            <person name="Hotuta T."/>
            <person name="Kusano J."/>
            <person name="Kanehori K."/>
            <person name="Takahashi-Fujii A."/>
            <person name="Hara H."/>
            <person name="Tanase T.-O."/>
            <person name="Nomura Y."/>
            <person name="Togiya S."/>
            <person name="Komai F."/>
            <person name="Hara R."/>
            <person name="Takeuchi K."/>
            <person name="Arita M."/>
            <person name="Imose N."/>
            <person name="Musashino K."/>
            <person name="Yuuki H."/>
            <person name="Oshima A."/>
            <person name="Sasaki N."/>
            <person name="Aotsuka S."/>
            <person name="Yoshikawa Y."/>
            <person name="Matsunawa H."/>
            <person name="Ichihara T."/>
            <person name="Shiohata N."/>
            <person name="Sano S."/>
            <person name="Moriya S."/>
            <person name="Momiyama H."/>
            <person name="Satoh N."/>
            <person name="Takami S."/>
            <person name="Terashima Y."/>
            <person name="Suzuki O."/>
            <person name="Nakagawa S."/>
            <person name="Senoh A."/>
            <person name="Mizoguchi H."/>
            <person name="Goto Y."/>
            <person name="Shimizu F."/>
            <person name="Wakebe H."/>
            <person name="Hishigaki H."/>
            <person name="Watanabe T."/>
            <person name="Sugiyama A."/>
            <person name="Takemoto M."/>
            <person name="Kawakami B."/>
            <person name="Yamazaki M."/>
            <person name="Watanabe K."/>
            <person name="Kumagai A."/>
            <person name="Itakura S."/>
            <person name="Fukuzumi Y."/>
            <person name="Fujimori Y."/>
            <person name="Komiyama M."/>
            <person name="Tashiro H."/>
            <person name="Tanigami A."/>
            <person name="Fujiwara T."/>
            <person name="Ono T."/>
            <person name="Yamada K."/>
            <person name="Fujii Y."/>
            <person name="Ozaki K."/>
            <person name="Hirao M."/>
            <person name="Ohmori Y."/>
            <person name="Kawabata A."/>
            <person name="Hikiji T."/>
            <person name="Kobatake N."/>
            <person name="Inagaki H."/>
            <person name="Ikema Y."/>
            <person name="Okamoto S."/>
            <person name="Okitani R."/>
            <person name="Kawakami T."/>
            <person name="Noguchi S."/>
            <person name="Itoh T."/>
            <person name="Shigeta K."/>
            <person name="Senba T."/>
            <person name="Matsumura K."/>
            <person name="Nakajima Y."/>
            <person name="Mizuno T."/>
            <person name="Morinaga M."/>
            <person name="Sasaki M."/>
            <person name="Togashi T."/>
            <person name="Oyama M."/>
            <person name="Hata H."/>
            <person name="Watanabe M."/>
            <person name="Komatsu T."/>
            <person name="Mizushima-Sugano J."/>
            <person name="Satoh T."/>
            <person name="Shirai Y."/>
            <person name="Takahashi Y."/>
            <person name="Nakagawa K."/>
            <person name="Okumura K."/>
            <person name="Nagase T."/>
            <person name="Nomura N."/>
            <person name="Kikuchi H."/>
            <person name="Masuho Y."/>
            <person name="Yamashita R."/>
            <person name="Nakai K."/>
            <person name="Yada T."/>
            <person name="Nakamura Y."/>
            <person name="Ohara O."/>
            <person name="Isogai T."/>
            <person name="Sugano S."/>
        </authorList>
    </citation>
    <scope>NUCLEOTIDE SEQUENCE [LARGE SCALE MRNA] (ISOFORMS 1 AND 2)</scope>
    <scope>VARIANT PRO-279</scope>
    <source>
        <tissue>Synovial cell</tissue>
        <tissue>Trachea</tissue>
    </source>
</reference>
<reference key="4">
    <citation type="journal article" date="2004" name="Nature">
        <title>The DNA sequence and comparative analysis of human chromosome 5.</title>
        <authorList>
            <person name="Schmutz J."/>
            <person name="Martin J."/>
            <person name="Terry A."/>
            <person name="Couronne O."/>
            <person name="Grimwood J."/>
            <person name="Lowry S."/>
            <person name="Gordon L.A."/>
            <person name="Scott D."/>
            <person name="Xie G."/>
            <person name="Huang W."/>
            <person name="Hellsten U."/>
            <person name="Tran-Gyamfi M."/>
            <person name="She X."/>
            <person name="Prabhakar S."/>
            <person name="Aerts A."/>
            <person name="Altherr M."/>
            <person name="Bajorek E."/>
            <person name="Black S."/>
            <person name="Branscomb E."/>
            <person name="Caoile C."/>
            <person name="Challacombe J.F."/>
            <person name="Chan Y.M."/>
            <person name="Denys M."/>
            <person name="Detter J.C."/>
            <person name="Escobar J."/>
            <person name="Flowers D."/>
            <person name="Fotopulos D."/>
            <person name="Glavina T."/>
            <person name="Gomez M."/>
            <person name="Gonzales E."/>
            <person name="Goodstein D."/>
            <person name="Grigoriev I."/>
            <person name="Groza M."/>
            <person name="Hammon N."/>
            <person name="Hawkins T."/>
            <person name="Haydu L."/>
            <person name="Israni S."/>
            <person name="Jett J."/>
            <person name="Kadner K."/>
            <person name="Kimball H."/>
            <person name="Kobayashi A."/>
            <person name="Lopez F."/>
            <person name="Lou Y."/>
            <person name="Martinez D."/>
            <person name="Medina C."/>
            <person name="Morgan J."/>
            <person name="Nandkeshwar R."/>
            <person name="Noonan J.P."/>
            <person name="Pitluck S."/>
            <person name="Pollard M."/>
            <person name="Predki P."/>
            <person name="Priest J."/>
            <person name="Ramirez L."/>
            <person name="Retterer J."/>
            <person name="Rodriguez A."/>
            <person name="Rogers S."/>
            <person name="Salamov A."/>
            <person name="Salazar A."/>
            <person name="Thayer N."/>
            <person name="Tice H."/>
            <person name="Tsai M."/>
            <person name="Ustaszewska A."/>
            <person name="Vo N."/>
            <person name="Wheeler J."/>
            <person name="Wu K."/>
            <person name="Yang J."/>
            <person name="Dickson M."/>
            <person name="Cheng J.-F."/>
            <person name="Eichler E.E."/>
            <person name="Olsen A."/>
            <person name="Pennacchio L.A."/>
            <person name="Rokhsar D.S."/>
            <person name="Richardson P."/>
            <person name="Lucas S.M."/>
            <person name="Myers R.M."/>
            <person name="Rubin E.M."/>
        </authorList>
    </citation>
    <scope>NUCLEOTIDE SEQUENCE [LARGE SCALE GENOMIC DNA]</scope>
</reference>
<reference key="5">
    <citation type="journal article" date="1999" name="Clin. Chem.">
        <title>Defect in dimethylglycine dehydrogenase, a new inborn error of metabolism: NMR spectroscopy study.</title>
        <authorList>
            <person name="Moolenaar S.H."/>
            <person name="Poggi-Bach J."/>
            <person name="Engelke U.F.H."/>
            <person name="Corstiaensen J.M.B."/>
            <person name="Heerschap A."/>
            <person name="de Jong J.G.N."/>
            <person name="Binzak B.A."/>
            <person name="Vockley J."/>
            <person name="Wevers R.A."/>
        </authorList>
    </citation>
    <scope>DISEASE</scope>
</reference>
<reference key="6">
    <citation type="journal article" date="2016" name="FEBS J.">
        <title>Structure and biochemical properties of recombinant human dimethylglycine dehydrogenase and comparison to the disease-related H109R variant.</title>
        <authorList>
            <person name="Augustin P."/>
            <person name="Hromic A."/>
            <person name="Pavkov-Keller T."/>
            <person name="Gruber K."/>
            <person name="Macheroux P."/>
        </authorList>
    </citation>
    <scope>X-RAY CRYSTALLOGRAPHY (3.09 ANGSTROMS) OF 29-866 IN COMPLEX WITH FAD</scope>
    <scope>CHARACTERIZATION OF VARIANT DMGDHD ARG-109</scope>
    <scope>FUNCTION</scope>
    <scope>CATALYTIC ACTIVITY</scope>
    <scope>COFACTOR</scope>
    <scope>BIOPHYSICOCHEMICAL PROPERTIES</scope>
    <scope>ENZYME KINETICS</scope>
</reference>
<reference key="7">
    <citation type="journal article" date="2014" name="J. Proteomics">
        <title>An enzyme assisted RP-RPLC approach for in-depth analysis of human liver phosphoproteome.</title>
        <authorList>
            <person name="Bian Y."/>
            <person name="Song C."/>
            <person name="Cheng K."/>
            <person name="Dong M."/>
            <person name="Wang F."/>
            <person name="Huang J."/>
            <person name="Sun D."/>
            <person name="Wang L."/>
            <person name="Ye M."/>
            <person name="Zou H."/>
        </authorList>
    </citation>
    <scope>VARIANT [LARGE SCALE ANALYSIS] PRO-646</scope>
    <scope>IDENTIFICATION BY MASS SPECTROMETRY [LARGE SCALE ANALYSIS]</scope>
    <source>
        <tissue>Liver</tissue>
    </source>
</reference>
<sequence>MLRPGAQLLRGLLLRSCPLQGSPGRPRSVCGREGEEKPPLSAETQWKDRAETVIIGGGCVGVSLAYHLAKAGMKDVVLLEKSELTAGSTWHAAGLTTYFHPGINLKKIHYDSIKLYEKLEEETGQVVGFHQPGSIRLATTPVRVDEFKYQMTRTGWHATEQYLIEPEKIQEMFPLLNMNKVLAGLYNPGDGHIDPYSLTMALAAGARKCGALLKYPAPVTSLKARSDGTWDVETPQGSMRANRIVNAAGFWAREVGKMIGLEHPLIPVQHQYVVTSTISEVKALKRELPVLRDLEGSYYLRQERDGLLFGPYESQEKMKVQDSWVTNGVPPGFGKELFESDLDRIMEHIKAAMEMVPVLKKADIINVVNGPITYSPDILPMVGPHQGVRNYWVAIGFGYGIIHAGGVGKYLSDWILHGEPPFDLIELDPNRYGKWTTTQYTEAKARESYGFNNIVGYPKEERFAGRPTQRVSGLYQRLESKCSMGFHAGWEQPHWFYKPGQDTQYRPSFRRTNWFEPVGSEYKQVMQRVAVTDLSPFGKFNIKGQDSIRLLDHLFANVIPKVGFTNISHMLTPKGRVYAELTVSHQSPGEFLLITGSGSELHDLRWIEEEAVKGGYDVEIKNITDELGVLGVAGPQARKVLQKLTSEDLSDDVFKFLQTKSLKVSNIPVTAIRISYTGELGWELYHRREDSVALYDAIMNAGQEEGIDNFGTYAMNALRLEKAFRAWGLEMNCDTNPLEAGLEYFVKLNKPADFIGKQALKQIKAKGLKRRLVCLTLATDDVDPEGNESIWYNGKVVGNTTSGSYSYSIQKSLAFAYVPVQLSEVGQQVEVELLGKNYPAVIIQEPLVLTEPTRNRLQKKGGKDKT</sequence>
<name>M2GD_HUMAN</name>
<keyword id="KW-0002">3D-structure</keyword>
<keyword id="KW-0007">Acetylation</keyword>
<keyword id="KW-0025">Alternative splicing</keyword>
<keyword id="KW-0225">Disease variant</keyword>
<keyword id="KW-0274">FAD</keyword>
<keyword id="KW-0285">Flavoprotein</keyword>
<keyword id="KW-0496">Mitochondrion</keyword>
<keyword id="KW-0560">Oxidoreductase</keyword>
<keyword id="KW-1267">Proteomics identification</keyword>
<keyword id="KW-1185">Reference proteome</keyword>
<keyword id="KW-0809">Transit peptide</keyword>
<feature type="transit peptide" description="Mitochondrion" evidence="3">
    <location>
        <begin position="1"/>
        <end position="50"/>
    </location>
</feature>
<feature type="chain" id="PRO_0000010767" description="Dimethylglycine dehydrogenase, mitochondrial">
    <location>
        <begin position="51"/>
        <end position="866"/>
    </location>
</feature>
<feature type="region of interest" description="Disordered" evidence="4">
    <location>
        <begin position="20"/>
        <end position="42"/>
    </location>
</feature>
<feature type="binding site" evidence="8 11">
    <location>
        <begin position="59"/>
        <end position="60"/>
    </location>
    <ligand>
        <name>FAD</name>
        <dbReference type="ChEBI" id="CHEBI:57692"/>
    </ligand>
</feature>
<feature type="binding site" evidence="8 11">
    <location>
        <begin position="80"/>
        <end position="81"/>
    </location>
    <ligand>
        <name>FAD</name>
        <dbReference type="ChEBI" id="CHEBI:57692"/>
    </ligand>
</feature>
<feature type="binding site" evidence="8 11">
    <location>
        <begin position="87"/>
        <end position="95"/>
    </location>
    <ligand>
        <name>FAD</name>
        <dbReference type="ChEBI" id="CHEBI:57692"/>
    </ligand>
</feature>
<feature type="binding site" evidence="8 11">
    <location>
        <position position="219"/>
    </location>
    <ligand>
        <name>FAD</name>
        <dbReference type="ChEBI" id="CHEBI:57692"/>
    </ligand>
</feature>
<feature type="binding site" evidence="1">
    <location>
        <position position="251"/>
    </location>
    <ligand>
        <name>FAD</name>
        <dbReference type="ChEBI" id="CHEBI:57692"/>
    </ligand>
</feature>
<feature type="binding site" evidence="8 11">
    <location>
        <begin position="397"/>
        <end position="402"/>
    </location>
    <ligand>
        <name>FAD</name>
        <dbReference type="ChEBI" id="CHEBI:57692"/>
    </ligand>
</feature>
<feature type="binding site" evidence="1">
    <location>
        <begin position="580"/>
        <end position="582"/>
    </location>
    <ligand>
        <name>(6S)-5,6,7,8-tetrahydrofolate</name>
        <dbReference type="ChEBI" id="CHEBI:57453"/>
    </ligand>
</feature>
<feature type="binding site" evidence="1">
    <location>
        <position position="676"/>
    </location>
    <ligand>
        <name>(6S)-5,6,7,8-tetrahydrofolate</name>
        <dbReference type="ChEBI" id="CHEBI:57453"/>
    </ligand>
</feature>
<feature type="binding site" evidence="1">
    <location>
        <begin position="683"/>
        <end position="685"/>
    </location>
    <ligand>
        <name>(6S)-5,6,7,8-tetrahydrofolate</name>
        <dbReference type="ChEBI" id="CHEBI:57453"/>
    </ligand>
</feature>
<feature type="binding site" evidence="1">
    <location>
        <position position="744"/>
    </location>
    <ligand>
        <name>(6S)-5,6,7,8-tetrahydrofolate</name>
        <dbReference type="ChEBI" id="CHEBI:57453"/>
    </ligand>
</feature>
<feature type="modified residue" description="Tele-8alpha-FAD histidine" evidence="8 11">
    <location>
        <position position="91"/>
    </location>
</feature>
<feature type="modified residue" description="N6-acetyllysine" evidence="2">
    <location>
        <position position="114"/>
    </location>
</feature>
<feature type="modified residue" description="N6-acetyllysine; alternate" evidence="2">
    <location>
        <position position="148"/>
    </location>
</feature>
<feature type="modified residue" description="N6-succinyllysine; alternate" evidence="2">
    <location>
        <position position="148"/>
    </location>
</feature>
<feature type="modified residue" description="N6-acetyllysine" evidence="2">
    <location>
        <position position="168"/>
    </location>
</feature>
<feature type="modified residue" description="N6-acetyllysine" evidence="2">
    <location>
        <position position="223"/>
    </location>
</feature>
<feature type="modified residue" description="N6-succinyllysine" evidence="2">
    <location>
        <position position="317"/>
    </location>
</feature>
<feature type="modified residue" description="N6-succinyllysine" evidence="2">
    <location>
        <position position="319"/>
    </location>
</feature>
<feature type="modified residue" description="N6-acetyllysine" evidence="2">
    <location>
        <position position="335"/>
    </location>
</feature>
<feature type="modified residue" description="N6-acetyllysine" evidence="2">
    <location>
        <position position="360"/>
    </location>
</feature>
<feature type="modified residue" description="N6-acetyllysine; alternate" evidence="2">
    <location>
        <position position="434"/>
    </location>
</feature>
<feature type="modified residue" description="N6-succinyllysine; alternate" evidence="2">
    <location>
        <position position="434"/>
    </location>
</feature>
<feature type="modified residue" description="N6-acetyllysine; alternate" evidence="2">
    <location>
        <position position="523"/>
    </location>
</feature>
<feature type="modified residue" description="N6-succinyllysine; alternate" evidence="2">
    <location>
        <position position="523"/>
    </location>
</feature>
<feature type="modified residue" description="N6-acetyllysine; alternate" evidence="2">
    <location>
        <position position="655"/>
    </location>
</feature>
<feature type="modified residue" description="N6-succinyllysine; alternate" evidence="2">
    <location>
        <position position="655"/>
    </location>
</feature>
<feature type="modified residue" description="N6-acetyllysine" evidence="2">
    <location>
        <position position="764"/>
    </location>
</feature>
<feature type="modified residue" description="N6-succinyllysine" evidence="2">
    <location>
        <position position="795"/>
    </location>
</feature>
<feature type="splice variant" id="VSP_056959" description="In isoform 2." evidence="9">
    <original>MLRPGAQLLRGLLLRSCP</original>
    <variation>MWSCWRNQSSRLDLPGTQ</variation>
    <location>
        <begin position="1"/>
        <end position="18"/>
    </location>
</feature>
<feature type="splice variant" id="VSP_056960" description="In isoform 2." evidence="9">
    <location>
        <begin position="19"/>
        <end position="398"/>
    </location>
</feature>
<feature type="splice variant" id="VSP_056961" description="In isoform 2." evidence="9">
    <original>PADFIGKQALKQIKAKGLKRRLVC</original>
    <variation>DQNSCFAHFKEENGWVSRWAIRPY</variation>
    <location>
        <begin position="751"/>
        <end position="774"/>
    </location>
</feature>
<feature type="splice variant" id="VSP_056962" description="In isoform 2." evidence="9">
    <location>
        <begin position="775"/>
        <end position="866"/>
    </location>
</feature>
<feature type="sequence variant" id="VAR_011505" description="In DMGDHD; shows 10 fold lower catalytic efficiency due to lower cofactor saturation and reduced thermal stability; dbSNP:rs121908331." evidence="6 8">
    <original>H</original>
    <variation>R</variation>
    <location>
        <position position="109"/>
    </location>
</feature>
<feature type="sequence variant" id="VAR_014950" description="In dbSNP:rs532964." evidence="5 7">
    <original>S</original>
    <variation>P</variation>
    <location>
        <position position="279"/>
    </location>
</feature>
<feature type="sequence variant" id="VAR_014951" description="In dbSNP:rs1805073." evidence="6">
    <original>A</original>
    <variation>G</variation>
    <location>
        <position position="530"/>
    </location>
</feature>
<feature type="sequence variant" id="VAR_014952" description="In dbSNP:rs1805074." evidence="6 12">
    <original>S</original>
    <variation>P</variation>
    <location>
        <position position="646"/>
    </location>
</feature>
<feature type="sequence conflict" description="In Ref. 3; BAG37277." evidence="10" ref="3">
    <original>M</original>
    <variation>I</variation>
    <location>
        <position position="381"/>
    </location>
</feature>
<feature type="sequence conflict" description="In Ref. 3; BAG37277." evidence="10" ref="3">
    <original>L</original>
    <variation>F</variation>
    <location>
        <position position="627"/>
    </location>
</feature>
<feature type="strand" evidence="13">
    <location>
        <begin position="48"/>
        <end position="55"/>
    </location>
</feature>
<feature type="helix" evidence="13">
    <location>
        <begin position="59"/>
        <end position="70"/>
    </location>
</feature>
<feature type="strand" evidence="13">
    <location>
        <begin position="74"/>
        <end position="79"/>
    </location>
</feature>
<feature type="strand" evidence="13">
    <location>
        <begin position="81"/>
        <end position="83"/>
    </location>
</feature>
<feature type="turn" evidence="13">
    <location>
        <begin position="84"/>
        <end position="88"/>
    </location>
</feature>
<feature type="helix" evidence="13">
    <location>
        <begin position="89"/>
        <end position="91"/>
    </location>
</feature>
<feature type="strand" evidence="13">
    <location>
        <begin position="101"/>
        <end position="103"/>
    </location>
</feature>
<feature type="helix" evidence="13">
    <location>
        <begin position="105"/>
        <end position="123"/>
    </location>
</feature>
<feature type="strand" evidence="13">
    <location>
        <begin position="134"/>
        <end position="138"/>
    </location>
</feature>
<feature type="helix" evidence="13">
    <location>
        <begin position="141"/>
        <end position="154"/>
    </location>
</feature>
<feature type="strand" evidence="13">
    <location>
        <begin position="157"/>
        <end position="159"/>
    </location>
</feature>
<feature type="strand" evidence="13">
    <location>
        <begin position="162"/>
        <end position="164"/>
    </location>
</feature>
<feature type="helix" evidence="13">
    <location>
        <begin position="166"/>
        <end position="170"/>
    </location>
</feature>
<feature type="strand" evidence="13">
    <location>
        <begin position="183"/>
        <end position="187"/>
    </location>
</feature>
<feature type="helix" evidence="13">
    <location>
        <begin position="195"/>
        <end position="208"/>
    </location>
</feature>
<feature type="strand" evidence="13">
    <location>
        <begin position="212"/>
        <end position="214"/>
    </location>
</feature>
<feature type="strand" evidence="13">
    <location>
        <begin position="221"/>
        <end position="224"/>
    </location>
</feature>
<feature type="strand" evidence="13">
    <location>
        <begin position="230"/>
        <end position="233"/>
    </location>
</feature>
<feature type="strand" evidence="13">
    <location>
        <begin position="238"/>
        <end position="246"/>
    </location>
</feature>
<feature type="helix" evidence="13">
    <location>
        <begin position="249"/>
        <end position="251"/>
    </location>
</feature>
<feature type="helix" evidence="13">
    <location>
        <begin position="252"/>
        <end position="256"/>
    </location>
</feature>
<feature type="helix" evidence="13">
    <location>
        <begin position="257"/>
        <end position="259"/>
    </location>
</feature>
<feature type="strand" evidence="13">
    <location>
        <begin position="266"/>
        <end position="275"/>
    </location>
</feature>
<feature type="helix" evidence="13">
    <location>
        <begin position="279"/>
        <end position="283"/>
    </location>
</feature>
<feature type="strand" evidence="13">
    <location>
        <begin position="290"/>
        <end position="293"/>
    </location>
</feature>
<feature type="turn" evidence="13">
    <location>
        <begin position="294"/>
        <end position="296"/>
    </location>
</feature>
<feature type="strand" evidence="13">
    <location>
        <begin position="298"/>
        <end position="303"/>
    </location>
</feature>
<feature type="strand" evidence="13">
    <location>
        <begin position="306"/>
        <end position="311"/>
    </location>
</feature>
<feature type="turn" evidence="13">
    <location>
        <begin position="315"/>
        <end position="317"/>
    </location>
</feature>
<feature type="helix" evidence="13">
    <location>
        <begin position="323"/>
        <end position="326"/>
    </location>
</feature>
<feature type="helix" evidence="13">
    <location>
        <begin position="342"/>
        <end position="344"/>
    </location>
</feature>
<feature type="helix" evidence="13">
    <location>
        <begin position="346"/>
        <end position="355"/>
    </location>
</feature>
<feature type="helix" evidence="13">
    <location>
        <begin position="357"/>
        <end position="360"/>
    </location>
</feature>
<feature type="strand" evidence="13">
    <location>
        <begin position="364"/>
        <end position="374"/>
    </location>
</feature>
<feature type="strand" evidence="13">
    <location>
        <begin position="381"/>
        <end position="384"/>
    </location>
</feature>
<feature type="strand" evidence="13">
    <location>
        <begin position="391"/>
        <end position="395"/>
    </location>
</feature>
<feature type="helix" evidence="13">
    <location>
        <begin position="400"/>
        <end position="415"/>
    </location>
</feature>
<feature type="turn" evidence="13">
    <location>
        <begin position="425"/>
        <end position="427"/>
    </location>
</feature>
<feature type="helix" evidence="13">
    <location>
        <begin position="438"/>
        <end position="450"/>
    </location>
</feature>
<feature type="helix" evidence="13">
    <location>
        <begin position="451"/>
        <end position="453"/>
    </location>
</feature>
<feature type="helix" evidence="13">
    <location>
        <begin position="474"/>
        <end position="478"/>
    </location>
</feature>
<feature type="helix" evidence="13">
    <location>
        <begin position="479"/>
        <end position="481"/>
    </location>
</feature>
<feature type="strand" evidence="13">
    <location>
        <begin position="482"/>
        <end position="487"/>
    </location>
</feature>
<feature type="strand" evidence="13">
    <location>
        <begin position="490"/>
        <end position="496"/>
    </location>
</feature>
<feature type="helix" evidence="13">
    <location>
        <begin position="515"/>
        <end position="527"/>
    </location>
</feature>
<feature type="strand" evidence="13">
    <location>
        <begin position="530"/>
        <end position="533"/>
    </location>
</feature>
<feature type="strand" evidence="13">
    <location>
        <begin position="537"/>
        <end position="544"/>
    </location>
</feature>
<feature type="helix" evidence="13">
    <location>
        <begin position="547"/>
        <end position="554"/>
    </location>
</feature>
<feature type="strand" evidence="13">
    <location>
        <begin position="564"/>
        <end position="571"/>
    </location>
</feature>
<feature type="strand" evidence="13">
    <location>
        <begin position="577"/>
        <end position="585"/>
    </location>
</feature>
<feature type="strand" evidence="13">
    <location>
        <begin position="591"/>
        <end position="595"/>
    </location>
</feature>
<feature type="helix" evidence="13">
    <location>
        <begin position="597"/>
        <end position="599"/>
    </location>
</feature>
<feature type="helix" evidence="13">
    <location>
        <begin position="600"/>
        <end position="613"/>
    </location>
</feature>
<feature type="strand" evidence="13">
    <location>
        <begin position="619"/>
        <end position="622"/>
    </location>
</feature>
<feature type="turn" evidence="13">
    <location>
        <begin position="624"/>
        <end position="626"/>
    </location>
</feature>
<feature type="strand" evidence="13">
    <location>
        <begin position="630"/>
        <end position="634"/>
    </location>
</feature>
<feature type="helix" evidence="13">
    <location>
        <begin position="637"/>
        <end position="642"/>
    </location>
</feature>
<feature type="turn" evidence="13">
    <location>
        <begin position="651"/>
        <end position="653"/>
    </location>
</feature>
<feature type="strand" evidence="13">
    <location>
        <begin position="658"/>
        <end position="664"/>
    </location>
</feature>
<feature type="strand" evidence="13">
    <location>
        <begin position="667"/>
        <end position="673"/>
    </location>
</feature>
<feature type="strand" evidence="13">
    <location>
        <begin position="678"/>
        <end position="687"/>
    </location>
</feature>
<feature type="helix" evidence="13">
    <location>
        <begin position="690"/>
        <end position="702"/>
    </location>
</feature>
<feature type="turn" evidence="13">
    <location>
        <begin position="703"/>
        <end position="706"/>
    </location>
</feature>
<feature type="helix" evidence="13">
    <location>
        <begin position="712"/>
        <end position="722"/>
    </location>
</feature>
<feature type="turn" evidence="13">
    <location>
        <begin position="727"/>
        <end position="729"/>
    </location>
</feature>
<feature type="turn" evidence="13">
    <location>
        <begin position="737"/>
        <end position="741"/>
    </location>
</feature>
<feature type="helix" evidence="13">
    <location>
        <begin position="743"/>
        <end position="745"/>
    </location>
</feature>
<feature type="strand" evidence="13">
    <location>
        <begin position="750"/>
        <end position="752"/>
    </location>
</feature>
<feature type="helix" evidence="13">
    <location>
        <begin position="757"/>
        <end position="766"/>
    </location>
</feature>
<feature type="strand" evidence="13">
    <location>
        <begin position="769"/>
        <end position="777"/>
    </location>
</feature>
<feature type="strand" evidence="13">
    <location>
        <begin position="789"/>
        <end position="792"/>
    </location>
</feature>
<feature type="strand" evidence="13">
    <location>
        <begin position="795"/>
        <end position="806"/>
    </location>
</feature>
<feature type="turn" evidence="13">
    <location>
        <begin position="807"/>
        <end position="810"/>
    </location>
</feature>
<feature type="strand" evidence="13">
    <location>
        <begin position="811"/>
        <end position="819"/>
    </location>
</feature>
<feature type="helix" evidence="13">
    <location>
        <begin position="820"/>
        <end position="822"/>
    </location>
</feature>
<feature type="strand" evidence="13">
    <location>
        <begin position="828"/>
        <end position="833"/>
    </location>
</feature>
<feature type="strand" evidence="13">
    <location>
        <begin position="836"/>
        <end position="842"/>
    </location>
</feature>
<feature type="turn" evidence="13">
    <location>
        <begin position="851"/>
        <end position="853"/>
    </location>
</feature>
<dbReference type="EC" id="1.5.8.4" evidence="8"/>
<dbReference type="EMBL" id="AF111858">
    <property type="protein sequence ID" value="AAF21941.1"/>
    <property type="molecule type" value="mRNA"/>
</dbReference>
<dbReference type="EMBL" id="AK303873">
    <property type="protein sequence ID" value="BAG64811.1"/>
    <property type="molecule type" value="mRNA"/>
</dbReference>
<dbReference type="EMBL" id="AK314736">
    <property type="protein sequence ID" value="BAG37277.1"/>
    <property type="molecule type" value="mRNA"/>
</dbReference>
<dbReference type="EMBL" id="AC008502">
    <property type="status" value="NOT_ANNOTATED_CDS"/>
    <property type="molecule type" value="Genomic_DNA"/>
</dbReference>
<dbReference type="EMBL" id="AC016559">
    <property type="status" value="NOT_ANNOTATED_CDS"/>
    <property type="molecule type" value="Genomic_DNA"/>
</dbReference>
<dbReference type="EMBL" id="AC020937">
    <property type="status" value="NOT_ANNOTATED_CDS"/>
    <property type="molecule type" value="Genomic_DNA"/>
</dbReference>
<dbReference type="CCDS" id="CCDS4044.1">
    <molecule id="Q9UI17-1"/>
</dbReference>
<dbReference type="RefSeq" id="NP_037523.2">
    <molecule id="Q9UI17-1"/>
    <property type="nucleotide sequence ID" value="NM_013391.3"/>
</dbReference>
<dbReference type="PDB" id="5L46">
    <property type="method" value="X-ray"/>
    <property type="resolution" value="3.09 A"/>
    <property type="chains" value="A/B=29-866"/>
</dbReference>
<dbReference type="PDBsum" id="5L46"/>
<dbReference type="SMR" id="Q9UI17"/>
<dbReference type="BioGRID" id="118994">
    <property type="interactions" value="13"/>
</dbReference>
<dbReference type="FunCoup" id="Q9UI17">
    <property type="interactions" value="575"/>
</dbReference>
<dbReference type="IntAct" id="Q9UI17">
    <property type="interactions" value="4"/>
</dbReference>
<dbReference type="MINT" id="Q9UI17"/>
<dbReference type="STRING" id="9606.ENSP00000255189"/>
<dbReference type="CarbonylDB" id="Q9UI17"/>
<dbReference type="iPTMnet" id="Q9UI17"/>
<dbReference type="PhosphoSitePlus" id="Q9UI17"/>
<dbReference type="BioMuta" id="DMGDH"/>
<dbReference type="DMDM" id="296434575"/>
<dbReference type="jPOST" id="Q9UI17"/>
<dbReference type="MassIVE" id="Q9UI17"/>
<dbReference type="PaxDb" id="9606-ENSP00000255189"/>
<dbReference type="PeptideAtlas" id="Q9UI17"/>
<dbReference type="ProteomicsDB" id="5764"/>
<dbReference type="ProteomicsDB" id="84455">
    <molecule id="Q9UI17-1"/>
</dbReference>
<dbReference type="Antibodypedia" id="48453">
    <property type="antibodies" value="183 antibodies from 26 providers"/>
</dbReference>
<dbReference type="DNASU" id="29958"/>
<dbReference type="Ensembl" id="ENST00000255189.8">
    <molecule id="Q9UI17-1"/>
    <property type="protein sequence ID" value="ENSP00000255189.3"/>
    <property type="gene ID" value="ENSG00000132837.15"/>
</dbReference>
<dbReference type="GeneID" id="29958"/>
<dbReference type="KEGG" id="hsa:29958"/>
<dbReference type="MANE-Select" id="ENST00000255189.8">
    <property type="protein sequence ID" value="ENSP00000255189.3"/>
    <property type="RefSeq nucleotide sequence ID" value="NM_013391.3"/>
    <property type="RefSeq protein sequence ID" value="NP_037523.2"/>
</dbReference>
<dbReference type="UCSC" id="uc003kfs.5">
    <molecule id="Q9UI17-1"/>
    <property type="organism name" value="human"/>
</dbReference>
<dbReference type="AGR" id="HGNC:24475"/>
<dbReference type="CTD" id="29958"/>
<dbReference type="DisGeNET" id="29958"/>
<dbReference type="GeneCards" id="DMGDH"/>
<dbReference type="HGNC" id="HGNC:24475">
    <property type="gene designation" value="DMGDH"/>
</dbReference>
<dbReference type="HPA" id="ENSG00000132837">
    <property type="expression patterns" value="Group enriched (kidney, liver)"/>
</dbReference>
<dbReference type="MalaCards" id="DMGDH"/>
<dbReference type="MIM" id="605849">
    <property type="type" value="gene"/>
</dbReference>
<dbReference type="MIM" id="605850">
    <property type="type" value="phenotype"/>
</dbReference>
<dbReference type="neXtProt" id="NX_Q9UI17"/>
<dbReference type="OpenTargets" id="ENSG00000132837"/>
<dbReference type="Orphanet" id="243343">
    <property type="disease" value="Dimethylglycine dehydrogenase deficiency"/>
</dbReference>
<dbReference type="PharmGKB" id="PA134947212"/>
<dbReference type="VEuPathDB" id="HostDB:ENSG00000132837"/>
<dbReference type="eggNOG" id="KOG2844">
    <property type="taxonomic scope" value="Eukaryota"/>
</dbReference>
<dbReference type="GeneTree" id="ENSGT00940000158176"/>
<dbReference type="HOGENOM" id="CLU_007884_11_1_1"/>
<dbReference type="InParanoid" id="Q9UI17"/>
<dbReference type="OMA" id="NGWERPN"/>
<dbReference type="OrthoDB" id="498204at2759"/>
<dbReference type="PAN-GO" id="Q9UI17">
    <property type="GO annotations" value="4 GO annotations based on evolutionary models"/>
</dbReference>
<dbReference type="PhylomeDB" id="Q9UI17"/>
<dbReference type="TreeFam" id="TF314735"/>
<dbReference type="BioCyc" id="MetaCyc:HS05695-MONOMER"/>
<dbReference type="BRENDA" id="1.5.8.4">
    <property type="organism ID" value="2681"/>
</dbReference>
<dbReference type="PathwayCommons" id="Q9UI17"/>
<dbReference type="Reactome" id="R-HSA-6798163">
    <property type="pathway name" value="Choline catabolism"/>
</dbReference>
<dbReference type="SignaLink" id="Q9UI17"/>
<dbReference type="UniPathway" id="UPA00291">
    <property type="reaction ID" value="UER00433"/>
</dbReference>
<dbReference type="BioGRID-ORCS" id="29958">
    <property type="hits" value="8 hits in 1155 CRISPR screens"/>
</dbReference>
<dbReference type="ChiTaRS" id="DMGDH">
    <property type="organism name" value="human"/>
</dbReference>
<dbReference type="GenomeRNAi" id="29958"/>
<dbReference type="Pharos" id="Q9UI17">
    <property type="development level" value="Tbio"/>
</dbReference>
<dbReference type="PRO" id="PR:Q9UI17"/>
<dbReference type="Proteomes" id="UP000005640">
    <property type="component" value="Chromosome 5"/>
</dbReference>
<dbReference type="RNAct" id="Q9UI17">
    <property type="molecule type" value="protein"/>
</dbReference>
<dbReference type="Bgee" id="ENSG00000132837">
    <property type="expression patterns" value="Expressed in kidney epithelium and 124 other cell types or tissues"/>
</dbReference>
<dbReference type="ExpressionAtlas" id="Q9UI17">
    <property type="expression patterns" value="baseline and differential"/>
</dbReference>
<dbReference type="GO" id="GO:0005737">
    <property type="term" value="C:cytoplasm"/>
    <property type="evidence" value="ECO:0000318"/>
    <property type="project" value="GO_Central"/>
</dbReference>
<dbReference type="GO" id="GO:0005759">
    <property type="term" value="C:mitochondrial matrix"/>
    <property type="evidence" value="ECO:0000318"/>
    <property type="project" value="GO_Central"/>
</dbReference>
<dbReference type="GO" id="GO:0005739">
    <property type="term" value="C:mitochondrion"/>
    <property type="evidence" value="ECO:0000314"/>
    <property type="project" value="HPA"/>
</dbReference>
<dbReference type="GO" id="GO:0047865">
    <property type="term" value="F:dimethylglycine dehydrogenase activity"/>
    <property type="evidence" value="ECO:0000315"/>
    <property type="project" value="UniProtKB"/>
</dbReference>
<dbReference type="GO" id="GO:0009055">
    <property type="term" value="F:electron transfer activity"/>
    <property type="evidence" value="ECO:0000303"/>
    <property type="project" value="UniProtKB"/>
</dbReference>
<dbReference type="GO" id="GO:0003723">
    <property type="term" value="F:RNA binding"/>
    <property type="evidence" value="ECO:0007005"/>
    <property type="project" value="UniProtKB"/>
</dbReference>
<dbReference type="GO" id="GO:0006579">
    <property type="term" value="P:amino-acid betaine catabolic process"/>
    <property type="evidence" value="ECO:0007669"/>
    <property type="project" value="UniProtKB-UniPathway"/>
</dbReference>
<dbReference type="GO" id="GO:0042426">
    <property type="term" value="P:choline catabolic process"/>
    <property type="evidence" value="ECO:0000315"/>
    <property type="project" value="UniProtKB"/>
</dbReference>
<dbReference type="GO" id="GO:0019695">
    <property type="term" value="P:choline metabolic process"/>
    <property type="evidence" value="ECO:0000303"/>
    <property type="project" value="UniProtKB"/>
</dbReference>
<dbReference type="FunFam" id="3.30.70.1400:FF:000005">
    <property type="entry name" value="Dimethylglycine dehydrogenase, mitochondrial"/>
    <property type="match status" value="1"/>
</dbReference>
<dbReference type="FunFam" id="2.40.30.110:FF:000005">
    <property type="entry name" value="dimethylglycine dehydrogenase, mitochondrial"/>
    <property type="match status" value="1"/>
</dbReference>
<dbReference type="Gene3D" id="2.40.30.110">
    <property type="entry name" value="Aminomethyltransferase beta-barrel domains"/>
    <property type="match status" value="1"/>
</dbReference>
<dbReference type="Gene3D" id="3.30.70.1400">
    <property type="entry name" value="Aminomethyltransferase beta-barrel domains"/>
    <property type="match status" value="1"/>
</dbReference>
<dbReference type="Gene3D" id="3.30.9.10">
    <property type="entry name" value="D-Amino Acid Oxidase, subunit A, domain 2"/>
    <property type="match status" value="1"/>
</dbReference>
<dbReference type="Gene3D" id="3.50.50.60">
    <property type="entry name" value="FAD/NAD(P)-binding domain"/>
    <property type="match status" value="1"/>
</dbReference>
<dbReference type="Gene3D" id="3.30.1360.120">
    <property type="entry name" value="Probable tRNA modification gtpase trme, domain 1"/>
    <property type="match status" value="1"/>
</dbReference>
<dbReference type="InterPro" id="IPR006076">
    <property type="entry name" value="FAD-dep_OxRdtase"/>
</dbReference>
<dbReference type="InterPro" id="IPR036188">
    <property type="entry name" value="FAD/NAD-bd_sf"/>
</dbReference>
<dbReference type="InterPro" id="IPR032503">
    <property type="entry name" value="FAO_M"/>
</dbReference>
<dbReference type="InterPro" id="IPR013977">
    <property type="entry name" value="GCST_C"/>
</dbReference>
<dbReference type="InterPro" id="IPR006222">
    <property type="entry name" value="GCV_T_N"/>
</dbReference>
<dbReference type="InterPro" id="IPR028896">
    <property type="entry name" value="GcvT/YgfZ/DmdA"/>
</dbReference>
<dbReference type="InterPro" id="IPR029043">
    <property type="entry name" value="GcvT/YgfZ_C"/>
</dbReference>
<dbReference type="InterPro" id="IPR027266">
    <property type="entry name" value="TrmE/GcvT_dom1"/>
</dbReference>
<dbReference type="PANTHER" id="PTHR43757">
    <property type="entry name" value="AMINOMETHYLTRANSFERASE"/>
    <property type="match status" value="1"/>
</dbReference>
<dbReference type="PANTHER" id="PTHR43757:SF2">
    <property type="entry name" value="AMINOMETHYLTRANSFERASE, MITOCHONDRIAL"/>
    <property type="match status" value="1"/>
</dbReference>
<dbReference type="Pfam" id="PF01266">
    <property type="entry name" value="DAO"/>
    <property type="match status" value="1"/>
</dbReference>
<dbReference type="Pfam" id="PF16350">
    <property type="entry name" value="FAO_M"/>
    <property type="match status" value="1"/>
</dbReference>
<dbReference type="Pfam" id="PF01571">
    <property type="entry name" value="GCV_T"/>
    <property type="match status" value="1"/>
</dbReference>
<dbReference type="Pfam" id="PF08669">
    <property type="entry name" value="GCV_T_C"/>
    <property type="match status" value="1"/>
</dbReference>
<dbReference type="SUPFAM" id="SSF101790">
    <property type="entry name" value="Aminomethyltransferase beta-barrel domain"/>
    <property type="match status" value="1"/>
</dbReference>
<dbReference type="SUPFAM" id="SSF54373">
    <property type="entry name" value="FAD-linked reductases, C-terminal domain"/>
    <property type="match status" value="1"/>
</dbReference>
<dbReference type="SUPFAM" id="SSF51905">
    <property type="entry name" value="FAD/NAD(P)-binding domain"/>
    <property type="match status" value="1"/>
</dbReference>
<dbReference type="SUPFAM" id="SSF103025">
    <property type="entry name" value="Folate-binding domain"/>
    <property type="match status" value="1"/>
</dbReference>
<comment type="function">
    <text evidence="8">Catalyzes the demethylation of N,N-dimethylglycine to sarcosine. Also has activity with sarcosine in vitro.</text>
</comment>
<comment type="catalytic activity">
    <reaction evidence="8">
        <text>(6S)-5,6,7,8-tetrahydrofolyl-(gamma-L-Glu)(n) + N,N-dimethylglycine + oxidized [electron-transfer flavoprotein] + H(+) = (6R)-5,10-methylenetetrahydrofolyl-(gamma-L-Glu)(n) + sarcosine + reduced [electron-transfer flavoprotein]</text>
        <dbReference type="Rhea" id="RHEA:52856"/>
        <dbReference type="Rhea" id="RHEA-COMP:10685"/>
        <dbReference type="Rhea" id="RHEA-COMP:10686"/>
        <dbReference type="Rhea" id="RHEA-COMP:13257"/>
        <dbReference type="Rhea" id="RHEA-COMP:14738"/>
        <dbReference type="ChEBI" id="CHEBI:15378"/>
        <dbReference type="ChEBI" id="CHEBI:57433"/>
        <dbReference type="ChEBI" id="CHEBI:57692"/>
        <dbReference type="ChEBI" id="CHEBI:58251"/>
        <dbReference type="ChEBI" id="CHEBI:58307"/>
        <dbReference type="ChEBI" id="CHEBI:136572"/>
        <dbReference type="ChEBI" id="CHEBI:141005"/>
        <dbReference type="EC" id="1.5.8.4"/>
    </reaction>
</comment>
<comment type="cofactor">
    <cofactor evidence="8">
        <name>FAD</name>
        <dbReference type="ChEBI" id="CHEBI:57692"/>
    </cofactor>
    <text evidence="8">Binds 1 FAD covalently per monomer.</text>
</comment>
<comment type="biophysicochemical properties">
    <kinetics>
        <KM evidence="8">1.4 mM for N,N-dimethylglycine</KM>
        <Vmax>22.1 umol/min/mg enzyme</Vmax>
        <text evidence="8">kcat is 213 min(-1) for N,N-dimethylglycine.</text>
    </kinetics>
</comment>
<comment type="pathway">
    <text>Amine and polyamine degradation; betaine degradation; sarcosine from betaine: step 2/2.</text>
</comment>
<comment type="subunit">
    <text>Monomer.</text>
</comment>
<comment type="subcellular location">
    <subcellularLocation>
        <location>Mitochondrion</location>
    </subcellularLocation>
</comment>
<comment type="alternative products">
    <event type="alternative splicing"/>
    <isoform>
        <id>Q9UI17-1</id>
        <name>1</name>
        <sequence type="displayed"/>
    </isoform>
    <isoform>
        <id>Q9UI17-2</id>
        <name>2</name>
        <sequence type="described" ref="VSP_056959 VSP_056960 VSP_056961 VSP_056962"/>
    </isoform>
</comment>
<comment type="disease" evidence="6 8">
    <disease id="DI-01497">
        <name>DMGDH deficiency</name>
        <acronym>DMGDHD</acronym>
        <description>Disorder characterized by fish odor, muscle fatigue with increased serum creatine kinase. Biochemically it is characterized by an increase of N,N-dimethylglycine (DMG) in serum and urine.</description>
        <dbReference type="MIM" id="605850"/>
    </disease>
    <text>The disease is caused by variants affecting the gene represented in this entry.</text>
</comment>
<comment type="similarity">
    <text evidence="10">Belongs to the GcvT family.</text>
</comment>
<accession>Q9UI17</accession>
<accession>B2RBN0</accession>
<accession>B4E1J9</accession>
<protein>
    <recommendedName>
        <fullName>Dimethylglycine dehydrogenase, mitochondrial</fullName>
        <ecNumber evidence="8">1.5.8.4</ecNumber>
    </recommendedName>
    <alternativeName>
        <fullName>ME2GLYDH</fullName>
    </alternativeName>
</protein>
<proteinExistence type="evidence at protein level"/>
<gene>
    <name type="primary">DMGDH</name>
</gene>
<evidence type="ECO:0000250" key="1">
    <source>
        <dbReference type="UniProtKB" id="Q63342"/>
    </source>
</evidence>
<evidence type="ECO:0000250" key="2">
    <source>
        <dbReference type="UniProtKB" id="Q9DBT9"/>
    </source>
</evidence>
<evidence type="ECO:0000255" key="3"/>
<evidence type="ECO:0000256" key="4">
    <source>
        <dbReference type="SAM" id="MobiDB-lite"/>
    </source>
</evidence>
<evidence type="ECO:0000269" key="5">
    <source>
    </source>
</evidence>
<evidence type="ECO:0000269" key="6">
    <source>
    </source>
</evidence>
<evidence type="ECO:0000269" key="7">
    <source>
    </source>
</evidence>
<evidence type="ECO:0000269" key="8">
    <source>
    </source>
</evidence>
<evidence type="ECO:0000303" key="9">
    <source>
    </source>
</evidence>
<evidence type="ECO:0000305" key="10"/>
<evidence type="ECO:0007744" key="11">
    <source>
        <dbReference type="PDB" id="5L46"/>
    </source>
</evidence>
<evidence type="ECO:0007744" key="12">
    <source>
    </source>
</evidence>
<evidence type="ECO:0007829" key="13">
    <source>
        <dbReference type="PDB" id="5L46"/>
    </source>
</evidence>
<organism>
    <name type="scientific">Homo sapiens</name>
    <name type="common">Human</name>
    <dbReference type="NCBI Taxonomy" id="9606"/>
    <lineage>
        <taxon>Eukaryota</taxon>
        <taxon>Metazoa</taxon>
        <taxon>Chordata</taxon>
        <taxon>Craniata</taxon>
        <taxon>Vertebrata</taxon>
        <taxon>Euteleostomi</taxon>
        <taxon>Mammalia</taxon>
        <taxon>Eutheria</taxon>
        <taxon>Euarchontoglires</taxon>
        <taxon>Primates</taxon>
        <taxon>Haplorrhini</taxon>
        <taxon>Catarrhini</taxon>
        <taxon>Hominidae</taxon>
        <taxon>Homo</taxon>
    </lineage>
</organism>